<sequence length="309" mass="33374">MVGFKATDVPPTATVKFLGAGTAACIADLITFPLDTAKVRLQIQGESQGLVRTAASAQYRGVLGTILTMVRTEGPRSLYNGLVAGLQRQMSFASVRIGLYDSVKQFYTKGSEHAGIGSRLLAGSTTGALAVAVAQPTDVVKVRFQAQARAGGGRRYQSTVEAYKTIAREEGIRGLWKGTSPNVARNAIVNCAELVTYDLIKDTLLKANLMTDDLPCHFTSAFGAGFCTTVIASPVDVVKTRYMNSALGQYHSAGHCALTMLRKEGPRAFYKGFMPSFLRLGSWNVVMFVTYEQLKRALMAAYQSREAPF</sequence>
<reference key="1">
    <citation type="submission" date="1996-09" db="EMBL/GenBank/DDBJ databases">
        <authorList>
            <person name="Raimbault S."/>
            <person name="Bouillaud F."/>
            <person name="Ricquier D."/>
        </authorList>
    </citation>
    <scope>NUCLEOTIDE SEQUENCE [MRNA]</scope>
    <source>
        <strain>BALB/cJ</strain>
        <tissue>Muscle</tissue>
    </source>
</reference>
<reference key="2">
    <citation type="journal article" date="1997" name="Diabetes">
        <title>Cloning and characterization of an uncoupling protein homolog: a potential molecular mediator of human thermogenesis.</title>
        <authorList>
            <person name="Gimeno R.E."/>
            <person name="Dembski M."/>
            <person name="Weng X."/>
            <person name="Deng N."/>
            <person name="Shyjan A.W."/>
            <person name="Gimeno C.J."/>
            <person name="Iris F."/>
            <person name="Ellis S.J."/>
            <person name="Woolf E.A."/>
            <person name="Tartaglia L.A."/>
        </authorList>
    </citation>
    <scope>NUCLEOTIDE SEQUENCE [MRNA]</scope>
    <scope>TISSUE SPECIFICITY</scope>
    <scope>CAUTION</scope>
    <source>
        <tissue>Spleen</tissue>
    </source>
</reference>
<reference key="3">
    <citation type="journal article" date="1998" name="FEBS Lett.">
        <title>Genomic organization and promoter function of the mouse uncoupling protein 2 (UCP2) gene.</title>
        <authorList>
            <person name="Yamada M."/>
            <person name="Hashida T."/>
            <person name="Shibusawa N."/>
            <person name="Iwasaki T."/>
            <person name="Murakami M."/>
            <person name="Monden T."/>
            <person name="Satoh T."/>
            <person name="Mori M."/>
        </authorList>
    </citation>
    <scope>NUCLEOTIDE SEQUENCE [GENOMIC DNA]</scope>
    <source>
        <strain>C57BL/6 X CBA</strain>
    </source>
</reference>
<reference key="4">
    <citation type="journal article" date="2004" name="Genome Res.">
        <title>The status, quality, and expansion of the NIH full-length cDNA project: the Mammalian Gene Collection (MGC).</title>
        <authorList>
            <consortium name="The MGC Project Team"/>
        </authorList>
    </citation>
    <scope>NUCLEOTIDE SEQUENCE [LARGE SCALE MRNA]</scope>
    <source>
        <strain>C57BL/6J</strain>
        <tissue>Colon</tissue>
        <tissue>Mammary gland</tissue>
    </source>
</reference>
<reference key="5">
    <citation type="journal article" date="2000" name="Nat. Genet.">
        <title>Disruption of the uncoupling protein-2 gene in mice reveals a role in immunity and reactive oxygen species production.</title>
        <authorList>
            <person name="Arsenijevic D."/>
            <person name="Onuma H."/>
            <person name="Pecqueur C."/>
            <person name="Raimbault S."/>
            <person name="Manning B.S."/>
            <person name="Miroux B."/>
            <person name="Couplan E."/>
            <person name="Alves-Guerra M.C."/>
            <person name="Goubern M."/>
            <person name="Surwit R."/>
            <person name="Bouillaud F."/>
            <person name="Richard D."/>
            <person name="Collins S."/>
            <person name="Ricquier D."/>
        </authorList>
    </citation>
    <scope>FUNCTION</scope>
    <scope>TISSUE SPECIFICITY</scope>
    <scope>INDUCTION</scope>
    <scope>DISRUPTION PHENOTYPE</scope>
    <scope>CAUTION</scope>
</reference>
<reference key="6">
    <citation type="journal article" date="2002" name="J. Biol. Chem.">
        <title>No evidence for a basal, retinoic, or superoxide-induced uncoupling activity of the uncoupling protein 2 present in spleen or lung mitochondria.</title>
        <authorList>
            <person name="Couplan E."/>
            <person name="del Mar Gonzalez-Barroso M."/>
            <person name="Alves-Guerra M.C."/>
            <person name="Ricquier D."/>
            <person name="Goubern M."/>
            <person name="Bouillaud F."/>
        </authorList>
    </citation>
    <scope>FUNCTION</scope>
    <scope>TISSUE SPECIFICITY</scope>
    <scope>CAUTION</scope>
</reference>
<reference key="7">
    <citation type="journal article" date="2002" name="Proc. Natl. Acad. Sci. U.S.A.">
        <title>A significant portion of mitochondrial proton leak in intact thymocytes depends on expression of UCP2.</title>
        <authorList>
            <person name="Krauss S."/>
            <person name="Zhang C.Y."/>
            <person name="Lowell B.B."/>
        </authorList>
    </citation>
    <scope>FUNCTION</scope>
    <scope>TISSUE SPECIFICITY</scope>
</reference>
<reference key="8">
    <citation type="journal article" date="2016" name="Cell">
        <title>UCP2 Regulates Mitochondrial Fission and Ventromedial Nucleus Control of Glucose Responsiveness.</title>
        <authorList>
            <person name="Toda C."/>
            <person name="Kim J.D."/>
            <person name="Impellizzeri D."/>
            <person name="Cuzzocrea S."/>
            <person name="Liu Z.W."/>
            <person name="Diano S."/>
        </authorList>
    </citation>
    <scope>FUNCTION</scope>
    <scope>TISSUE SPECIFICITY</scope>
    <scope>DISRUPTION PHENOTYPE</scope>
</reference>
<reference key="9">
    <citation type="journal article" date="2021" name="Biochim. Biophys. Acta">
        <title>Mitochondrial proton leaks and uncoupling proteins.</title>
        <authorList>
            <person name="Nicholls D.G."/>
        </authorList>
    </citation>
    <scope>REVIEW</scope>
    <scope>CAUTION</scope>
</reference>
<reference key="10">
    <citation type="journal article" date="2021" name="Immunity">
        <title>IL-33-induced metabolic reprogramming controls the differentiation of alternatively activated macrophages and the resolution of inflammation.</title>
        <authorList>
            <person name="Faas M."/>
            <person name="Ipseiz N."/>
            <person name="Ackermann J."/>
            <person name="Culemann S."/>
            <person name="Grueneboom A."/>
            <person name="Schroeder F."/>
            <person name="Rothe T."/>
            <person name="Scholtysek C."/>
            <person name="Eberhardt M."/>
            <person name="Boettcher M."/>
            <person name="Kirchner P."/>
            <person name="Stoll C."/>
            <person name="Ekici A."/>
            <person name="Fuchs M."/>
            <person name="Kunz M."/>
            <person name="Weigmann B."/>
            <person name="Wirtz S."/>
            <person name="Lang R."/>
            <person name="Hofmann J."/>
            <person name="Vera J."/>
            <person name="Voehringer D."/>
            <person name="Michelucci A."/>
            <person name="Mougiakakos D."/>
            <person name="Uderhardt S."/>
            <person name="Schett G."/>
            <person name="Kroenke G."/>
        </authorList>
    </citation>
    <scope>FUNCTION</scope>
    <scope>SUBCELLULAR LOCATION</scope>
</reference>
<reference key="11">
    <citation type="journal article" date="2011" name="Nature">
        <title>Mitochondrial uncoupling protein 2 structure determined by NMR molecular fragment searching.</title>
        <authorList>
            <person name="Berardi M.J."/>
            <person name="Shih W.M."/>
            <person name="Harrison S.C."/>
            <person name="Chou J.J."/>
        </authorList>
    </citation>
    <scope>STRUCTURE BY NMR OF 14-309</scope>
    <scope>TOPOLOGY</scope>
    <scope>DOMAIN</scope>
    <scope>FUNCTION</scope>
    <scope>TRANSPORTER ACTIVITY</scope>
    <scope>ACTIVITY REGULATION</scope>
</reference>
<reference key="12">
    <citation type="journal article" date="2014" name="Cell Metab.">
        <title>Fatty acid flippase activity of UCP2 is essential for its proton transport in mitochondria.</title>
        <authorList>
            <person name="Berardi M.J."/>
            <person name="Chou J.J."/>
        </authorList>
    </citation>
    <scope>STRUCTURE BY NMR OF 14-309</scope>
    <scope>FUNCTION</scope>
    <scope>TRANSPORTER ACTIVITY</scope>
    <scope>ACTIVITY REGULATION</scope>
    <scope>DOMAIN</scope>
    <scope>SITE</scope>
    <scope>MUTAGENESIS OF LYS-16; ILE-30; ARG-60; ARG-76; ARG-88; LYS-141; ARG-185; ARG-241; ARG-267; LYS-271; SER-276; LEU-278 AND ARG-279</scope>
</reference>
<comment type="function">
    <text evidence="1 3 4 5 6 7 8 9">Antiporter that exports dicarboxylate intermediates of the Krebs cycle in exchange for phosphate plus a proton across the inner membrane of mitochondria, a process driven by mitochondrial motive force with an overall impact on glycolysis, glutaminolysis and glutathione-dependent redox balance. Continuous export of oxaloacetate and related four-carbon dicarboxylates from mitochondrial matrix into the cytosol negatively regulates the oxidation of acetyl-CoA substrates via the Krebs cycle lowering the ATP/ADP ratio and reactive oxygen species (ROS) production (By similarity). May mediate inducible proton entry into the mitochondrial matrix affecting ATP turnover as a protection mechanism against oxidative stress. The proton currents are most likely associated with fatty acid flipping across the inner membrane of mitochondria in a metabolic process regulated by free fatty acids and purine nucleotides (By similarity) (PubMed:11101840, PubMed:11756659, PubMed:12011051, PubMed:21785437, PubMed:25127353). Regulates the use of glucose as a source of energy. Required for glucose-induced DRP1-dependent mitochondrial fission and neuron activation in the ventromedial nucleus of the hypothalamus (VMH). This mitochondrial adaptation mechanism modulates the VMH pool of glucose-excited neurons with an impact on systemic glucose homeostasis (PubMed:26919426). Regulates ROS levels and metabolic reprogramming of macrophages during the resolution phase of inflammation. Attenuates ROS production in response to IL33 to preserve the integrity of the Krebs cycle required for persistent production of itaconate and subsequent GATA3-dependent differentiation of inflammation-resolving alternatively activated macrophages (PubMed:34644537). Can unidirectionally transport anions including L-malate, L-aspartate, phosphate and chloride ions (By similarity). Does not mediate adaptive thermogenesis (PubMed:11101840).</text>
</comment>
<comment type="catalytic activity">
    <reaction evidence="1">
        <text>L-aspartate(out) + phosphate(in) + H(+)(in) = L-aspartate(in) + phosphate(out) + H(+)(out)</text>
        <dbReference type="Rhea" id="RHEA:73307"/>
        <dbReference type="ChEBI" id="CHEBI:15378"/>
        <dbReference type="ChEBI" id="CHEBI:29991"/>
        <dbReference type="ChEBI" id="CHEBI:43474"/>
    </reaction>
</comment>
<comment type="catalytic activity">
    <reaction evidence="1">
        <text>oxaloacetate(out) + phosphate(in) + H(+)(in) = oxaloacetate(in) + phosphate(out) + H(+)(out)</text>
        <dbReference type="Rhea" id="RHEA:73303"/>
        <dbReference type="ChEBI" id="CHEBI:15378"/>
        <dbReference type="ChEBI" id="CHEBI:16452"/>
        <dbReference type="ChEBI" id="CHEBI:43474"/>
    </reaction>
</comment>
<comment type="catalytic activity">
    <reaction evidence="1">
        <text>(S)-malate(out) + phosphate(in) + H(+)(in) = (S)-malate(in) + phosphate(out) + H(+)(out)</text>
        <dbReference type="Rhea" id="RHEA:73299"/>
        <dbReference type="ChEBI" id="CHEBI:15378"/>
        <dbReference type="ChEBI" id="CHEBI:15589"/>
        <dbReference type="ChEBI" id="CHEBI:43474"/>
    </reaction>
</comment>
<comment type="catalytic activity">
    <reaction evidence="1">
        <text>malonate(out) + phosphate(in) + H(+)(in) = malonate(in) + phosphate(out) + H(+)(out)</text>
        <dbReference type="Rhea" id="RHEA:73387"/>
        <dbReference type="ChEBI" id="CHEBI:15378"/>
        <dbReference type="ChEBI" id="CHEBI:15792"/>
        <dbReference type="ChEBI" id="CHEBI:43474"/>
    </reaction>
</comment>
<comment type="catalytic activity">
    <reaction evidence="1">
        <text>sulfate(out) + phosphate(in) + H(+)(in) = sulfate(in) + phosphate(out) + H(+)(out)</text>
        <dbReference type="Rhea" id="RHEA:73391"/>
        <dbReference type="ChEBI" id="CHEBI:15378"/>
        <dbReference type="ChEBI" id="CHEBI:16189"/>
        <dbReference type="ChEBI" id="CHEBI:43474"/>
    </reaction>
</comment>
<comment type="catalytic activity">
    <reaction evidence="1">
        <text>(S)-malate(out) = (S)-malate(in)</text>
        <dbReference type="Rhea" id="RHEA:74555"/>
        <dbReference type="ChEBI" id="CHEBI:15589"/>
    </reaction>
</comment>
<comment type="catalytic activity">
    <reaction evidence="1">
        <text>L-aspartate(out) = L-aspartate(in)</text>
        <dbReference type="Rhea" id="RHEA:66332"/>
        <dbReference type="ChEBI" id="CHEBI:29991"/>
    </reaction>
</comment>
<comment type="catalytic activity">
    <reaction evidence="1">
        <text>phosphate(in) = phosphate(out)</text>
        <dbReference type="Rhea" id="RHEA:32823"/>
        <dbReference type="ChEBI" id="CHEBI:43474"/>
    </reaction>
</comment>
<comment type="catalytic activity">
    <reaction evidence="1">
        <text>chloride(in) = chloride(out)</text>
        <dbReference type="Rhea" id="RHEA:29823"/>
        <dbReference type="ChEBI" id="CHEBI:17996"/>
    </reaction>
</comment>
<comment type="catalytic activity">
    <reaction evidence="6 7">
        <text>H(+)(in) = H(+)(out)</text>
        <dbReference type="Rhea" id="RHEA:34979"/>
        <dbReference type="ChEBI" id="CHEBI:15378"/>
    </reaction>
</comment>
<comment type="catalytic activity">
    <reaction evidence="7">
        <text>a long-chain fatty acid(out) = a long-chain fatty acid(in)</text>
        <dbReference type="Rhea" id="RHEA:39283"/>
        <dbReference type="ChEBI" id="CHEBI:57560"/>
    </reaction>
</comment>
<comment type="activity regulation">
    <text evidence="6 7">Proton conductance is activated by free long-chain fatty acids and allosterically inhibited by purine nucleotides. Could be constitutively inhibited by GDP.</text>
</comment>
<comment type="subunit">
    <text evidence="1">Homotetramer. Adopts an asymmetrical dimer of dimers functional form. Interacts with MICU1 (when methylated); leading to decrease the calcium sensitivity of MICU1.</text>
</comment>
<comment type="subcellular location">
    <subcellularLocation>
        <location evidence="9">Mitochondrion inner membrane</location>
        <topology evidence="6">Multi-pass membrane protein</topology>
    </subcellularLocation>
    <text evidence="9">Translocates to mitochondria in macrophages upon IL33 stimulation.</text>
</comment>
<comment type="tissue specificity">
    <text evidence="3 4 5 8 10">Widely expressed. Highest in spleen, lung, white and brown adipose tissues (PubMed:11101840, PubMed:12011051, PubMed:9133562). 4-6 times higher levels are detected in white adipose tissue of ob/ob and db/db mice when compared to lean littermates (PubMed:9133562). Expressed in neurons of the ventromedial nucleus of the hypothalamus (at protein level) (PubMed:26919426). Expressed in thymocytes (at protein level) (PubMed:11756659).</text>
</comment>
<comment type="induction">
    <text evidence="3">Down-regulated upon macrophage stimulation with LPS.</text>
</comment>
<comment type="domain">
    <text evidence="6 7">The GDP-binding domain is located within the hydrophilic cavity, with GDP phosphates likely forming salt bridges with the charged residues, Lys-141 and Arg-185.</text>
</comment>
<comment type="domain">
    <text evidence="7">The long-chain fatty acid-binding domain consists of an hydrophobic groove between peripheral transmembrane helices 1 and 6 near the matrix side.</text>
</comment>
<comment type="disruption phenotype">
    <text evidence="3 8">Mutant mice are viable, have normal postnatal development and show normal thermogenesis in response to cold and diet (PubMed:11101840). They develop glucose intolerance through reduced insulin sensitivity in peripheral organs (PubMed:26919426). Deficient mice are resistant to infection by intracellular parasite Toxoplasma gondi likely due to increased macrophage ROS production (PubMed:11101840).</text>
</comment>
<comment type="similarity">
    <text evidence="12">Belongs to the mitochondrial carrier (TC 2.A.29) family.</text>
</comment>
<comment type="caution">
    <text evidence="3 5 10 11">The role of UCP2/SLC25A8 in mitochondrial proton conductance is a matter of debate. It was initially suggested that it mediates proton leak that increases net proton conductance in response to ROS such as reactive alkenals generated during fatty acid oxidation in mitochondria. By lowering the proton motive force, it would provide for feedback control of mitochondrial ROS metabolism limiting extensive ROS production and protecting cells against oxidative stress. This activity and its potential regulation by ubiquinones and nucleotides was disputed by later studies, which failed to reproduce the effect on proton conductance under physiological conditions. Rather than 'uncoupling' the link between electron transfer and ATP synthesis, it may couple metabolite transport to proton flux to allow for optimal ATP turnover.</text>
</comment>
<gene>
    <name type="primary">Ucp2</name>
    <name type="synonym">Slc25a8</name>
</gene>
<organism>
    <name type="scientific">Mus musculus</name>
    <name type="common">Mouse</name>
    <dbReference type="NCBI Taxonomy" id="10090"/>
    <lineage>
        <taxon>Eukaryota</taxon>
        <taxon>Metazoa</taxon>
        <taxon>Chordata</taxon>
        <taxon>Craniata</taxon>
        <taxon>Vertebrata</taxon>
        <taxon>Euteleostomi</taxon>
        <taxon>Mammalia</taxon>
        <taxon>Eutheria</taxon>
        <taxon>Euarchontoglires</taxon>
        <taxon>Glires</taxon>
        <taxon>Rodentia</taxon>
        <taxon>Myomorpha</taxon>
        <taxon>Muroidea</taxon>
        <taxon>Muridae</taxon>
        <taxon>Murinae</taxon>
        <taxon>Mus</taxon>
        <taxon>Mus</taxon>
    </lineage>
</organism>
<proteinExistence type="evidence at protein level"/>
<accession>P70406</accession>
<accession>O88285</accession>
<evidence type="ECO:0000250" key="1">
    <source>
        <dbReference type="UniProtKB" id="P55851"/>
    </source>
</evidence>
<evidence type="ECO:0000255" key="2">
    <source>
        <dbReference type="PROSITE-ProRule" id="PRU00282"/>
    </source>
</evidence>
<evidence type="ECO:0000269" key="3">
    <source>
    </source>
</evidence>
<evidence type="ECO:0000269" key="4">
    <source>
    </source>
</evidence>
<evidence type="ECO:0000269" key="5">
    <source>
    </source>
</evidence>
<evidence type="ECO:0000269" key="6">
    <source>
    </source>
</evidence>
<evidence type="ECO:0000269" key="7">
    <source>
    </source>
</evidence>
<evidence type="ECO:0000269" key="8">
    <source>
    </source>
</evidence>
<evidence type="ECO:0000269" key="9">
    <source>
    </source>
</evidence>
<evidence type="ECO:0000269" key="10">
    <source>
    </source>
</evidence>
<evidence type="ECO:0000303" key="11">
    <source>
    </source>
</evidence>
<evidence type="ECO:0000305" key="12"/>
<evidence type="ECO:0007744" key="13">
    <source>
        <dbReference type="PDB" id="2LCK"/>
    </source>
</evidence>
<evidence type="ECO:0007829" key="14">
    <source>
        <dbReference type="PDB" id="2LCK"/>
    </source>
</evidence>
<keyword id="KW-0002">3D-structure</keyword>
<keyword id="KW-0472">Membrane</keyword>
<keyword id="KW-0496">Mitochondrion</keyword>
<keyword id="KW-0999">Mitochondrion inner membrane</keyword>
<keyword id="KW-1185">Reference proteome</keyword>
<keyword id="KW-0677">Repeat</keyword>
<keyword id="KW-0812">Transmembrane</keyword>
<keyword id="KW-1133">Transmembrane helix</keyword>
<keyword id="KW-0813">Transport</keyword>
<feature type="chain" id="PRO_0000090665" description="Dicarboxylate carrier UCP2">
    <location>
        <begin position="1"/>
        <end position="309"/>
    </location>
</feature>
<feature type="topological domain" description="Mitochondrial intermembrane" evidence="12">
    <location>
        <begin position="1"/>
        <end position="16"/>
    </location>
</feature>
<feature type="transmembrane region" description="Helical; Name=1" evidence="6 13">
    <location>
        <begin position="17"/>
        <end position="40"/>
    </location>
</feature>
<feature type="topological domain" description="Mitochondrial matrix" evidence="12">
    <location>
        <begin position="41"/>
        <end position="77"/>
    </location>
</feature>
<feature type="transmembrane region" description="Helical; Name=2" evidence="6 13">
    <location>
        <begin position="78"/>
        <end position="103"/>
    </location>
</feature>
<feature type="topological domain" description="Mitochondrial intermembrane" evidence="12">
    <location>
        <begin position="104"/>
        <end position="119"/>
    </location>
</feature>
<feature type="transmembrane region" description="Helical; Name=3" evidence="6 13">
    <location>
        <begin position="120"/>
        <end position="145"/>
    </location>
</feature>
<feature type="topological domain" description="Mitochondrial matrix" evidence="12">
    <location>
        <begin position="146"/>
        <end position="173"/>
    </location>
</feature>
<feature type="transmembrane region" description="Helical; Name=4" evidence="6 13">
    <location>
        <begin position="174"/>
        <end position="199"/>
    </location>
</feature>
<feature type="topological domain" description="Mitochondrial intermembrane" evidence="12">
    <location>
        <begin position="200"/>
        <end position="217"/>
    </location>
</feature>
<feature type="transmembrane region" description="Helical; Name=5" evidence="6 13">
    <location>
        <begin position="218"/>
        <end position="242"/>
    </location>
</feature>
<feature type="topological domain" description="Mitochondrial matrix" evidence="12">
    <location>
        <begin position="243"/>
        <end position="268"/>
    </location>
</feature>
<feature type="transmembrane region" description="Helical; Name=6" evidence="6 13">
    <location>
        <begin position="269"/>
        <end position="294"/>
    </location>
</feature>
<feature type="topological domain" description="Mitochondrial intermembrane" evidence="12">
    <location>
        <begin position="295"/>
        <end position="309"/>
    </location>
</feature>
<feature type="repeat" description="Solcar 1" evidence="2">
    <location>
        <begin position="11"/>
        <end position="106"/>
    </location>
</feature>
<feature type="repeat" description="Solcar 2" evidence="2">
    <location>
        <begin position="114"/>
        <end position="203"/>
    </location>
</feature>
<feature type="repeat" description="Solcar 3" evidence="2">
    <location>
        <begin position="212"/>
        <end position="297"/>
    </location>
</feature>
<feature type="region of interest" description="Important for interaction with long-chain fatty acids" evidence="7">
    <location>
        <begin position="16"/>
        <end position="63"/>
    </location>
</feature>
<feature type="region of interest" description="Important for interaction with long-chain fatty acids" evidence="7">
    <location>
        <begin position="278"/>
        <end position="285"/>
    </location>
</feature>
<feature type="site" description="Important for inhibition by GDP" evidence="7">
    <location>
        <position position="141"/>
    </location>
</feature>
<feature type="site" description="Important for inhibition by GDP" evidence="7">
    <location>
        <position position="185"/>
    </location>
</feature>
<feature type="mutagenesis site" description="Reduces proton conductance and long-chain fatty acid transport. Retains normal inhibition by GDP." evidence="7">
    <original>K</original>
    <variation>S</variation>
    <location>
        <position position="16"/>
    </location>
</feature>
<feature type="mutagenesis site" description="Does not affect long-chain fatty acid transport or inhibition by GDP." evidence="7">
    <original>I</original>
    <variation>A</variation>
    <location>
        <position position="30"/>
    </location>
</feature>
<feature type="mutagenesis site" description="Reduces proton conductance to around 40% of wild-type value. Reduces long-chain fatty acid transport. Retains normal inhibition by GDP." evidence="7">
    <original>R</original>
    <variation>S</variation>
    <location>
        <position position="60"/>
    </location>
</feature>
<feature type="mutagenesis site" description="Reduces proton conductance to around 55% of wild-type value; when associated with Ser-271." evidence="7">
    <original>R</original>
    <variation>S</variation>
    <location>
        <position position="60"/>
    </location>
</feature>
<feature type="mutagenesis site" description="Has no significant effect on proton conductance, long-chain fatty acid transport or inhibition by GDP." evidence="7">
    <original>R</original>
    <variation>S</variation>
    <location>
        <position position="76"/>
    </location>
</feature>
<feature type="mutagenesis site" description="Reduces long-chain fatty acid transport and inhibition by GDP." evidence="7">
    <original>R</original>
    <variation>T</variation>
    <location>
        <position position="88"/>
    </location>
</feature>
<feature type="mutagenesis site" description="Reduces proton conductance, long-chain fatty acid transport and inhibition by GDP." evidence="7">
    <original>K</original>
    <variation>T</variation>
    <location>
        <position position="141"/>
    </location>
</feature>
<feature type="mutagenesis site" description="Reduces inhibition by GDP but does not affect long-chain fatty acid transport." evidence="7">
    <original>R</original>
    <variation>T</variation>
    <location>
        <position position="185"/>
    </location>
</feature>
<feature type="mutagenesis site" description="Reduces proton conductance and long-chain fatty acid transport. Retains normal inhibition by GDP." evidence="7">
    <original>R</original>
    <variation>S</variation>
    <location>
        <position position="241"/>
    </location>
</feature>
<feature type="mutagenesis site" description="Has no significant effect on proton conductance." evidence="7">
    <original>R</original>
    <variation>S</variation>
    <location>
        <position position="267"/>
    </location>
</feature>
<feature type="mutagenesis site" description="Reduces proton conductance to around 40% of wild-type value. Displays reduced long-chain fatty acid transport. Retains normal inhibition by GDP." evidence="7">
    <original>K</original>
    <variation>S</variation>
    <location>
        <position position="271"/>
    </location>
</feature>
<feature type="mutagenesis site" description="Reduces proton conductance to around 55% of wild-type value; when associated with Ser-60." evidence="7">
    <original>K</original>
    <variation>S</variation>
    <location>
        <position position="271"/>
    </location>
</feature>
<feature type="mutagenesis site" description="Has no significant effect on proton conductance." evidence="7">
    <original>S</original>
    <variation>R</variation>
    <location>
        <position position="276"/>
    </location>
</feature>
<feature type="mutagenesis site" description="Does not affect long-chain fatty acid transport or inhibition by GDP." evidence="7">
    <original>L</original>
    <variation>A</variation>
    <location>
        <position position="278"/>
    </location>
</feature>
<feature type="mutagenesis site" description="Reduces the rate of proton conductance and long-chain fatty acid transport. Retains normal inhibition by GDP." evidence="7">
    <original>R</original>
    <variation>S</variation>
    <location>
        <position position="279"/>
    </location>
</feature>
<feature type="sequence conflict" description="In Ref. 3; BAA32532." evidence="12" ref="3">
    <original>V</original>
    <variation>I</variation>
    <location>
        <position position="285"/>
    </location>
</feature>
<feature type="helix" evidence="14">
    <location>
        <begin position="16"/>
        <end position="29"/>
    </location>
</feature>
<feature type="helix" evidence="14">
    <location>
        <begin position="32"/>
        <end position="40"/>
    </location>
</feature>
<feature type="helix" evidence="14">
    <location>
        <begin position="50"/>
        <end position="53"/>
    </location>
</feature>
<feature type="helix" evidence="14">
    <location>
        <begin position="62"/>
        <end position="73"/>
    </location>
</feature>
<feature type="helix" evidence="14">
    <location>
        <begin position="75"/>
        <end position="79"/>
    </location>
</feature>
<feature type="helix" evidence="14">
    <location>
        <begin position="82"/>
        <end position="95"/>
    </location>
</feature>
<feature type="turn" evidence="14">
    <location>
        <begin position="96"/>
        <end position="98"/>
    </location>
</feature>
<feature type="helix" evidence="14">
    <location>
        <begin position="99"/>
        <end position="107"/>
    </location>
</feature>
<feature type="helix" evidence="14">
    <location>
        <begin position="116"/>
        <end position="133"/>
    </location>
</feature>
<feature type="helix" evidence="14">
    <location>
        <begin position="136"/>
        <end position="146"/>
    </location>
</feature>
<feature type="strand" evidence="14">
    <location>
        <begin position="153"/>
        <end position="155"/>
    </location>
</feature>
<feature type="helix" evidence="14">
    <location>
        <begin position="159"/>
        <end position="170"/>
    </location>
</feature>
<feature type="helix" evidence="14">
    <location>
        <begin position="172"/>
        <end position="202"/>
    </location>
</feature>
<feature type="turn" evidence="14">
    <location>
        <begin position="203"/>
        <end position="208"/>
    </location>
</feature>
<feature type="helix" evidence="14">
    <location>
        <begin position="214"/>
        <end position="242"/>
    </location>
</feature>
<feature type="strand" evidence="14">
    <location>
        <begin position="247"/>
        <end position="249"/>
    </location>
</feature>
<feature type="helix" evidence="14">
    <location>
        <begin position="253"/>
        <end position="262"/>
    </location>
</feature>
<feature type="helix" evidence="14">
    <location>
        <begin position="267"/>
        <end position="270"/>
    </location>
</feature>
<feature type="helix" evidence="14">
    <location>
        <begin position="274"/>
        <end position="295"/>
    </location>
</feature>
<feature type="helix" evidence="14">
    <location>
        <begin position="301"/>
        <end position="306"/>
    </location>
</feature>
<protein>
    <recommendedName>
        <fullName evidence="1">Dicarboxylate carrier UCP2</fullName>
    </recommendedName>
    <alternativeName>
        <fullName>Mitochondrial uncoupling protein 2</fullName>
        <shortName>UCP 2</shortName>
    </alternativeName>
    <alternativeName>
        <fullName>Solute carrier family 25 member 8</fullName>
    </alternativeName>
    <alternativeName>
        <fullName>UCPH</fullName>
    </alternativeName>
</protein>
<name>UCP2_MOUSE</name>
<dbReference type="EMBL" id="U69135">
    <property type="protein sequence ID" value="AAB17666.1"/>
    <property type="molecule type" value="mRNA"/>
</dbReference>
<dbReference type="EMBL" id="U94593">
    <property type="protein sequence ID" value="AAB53092.1"/>
    <property type="molecule type" value="mRNA"/>
</dbReference>
<dbReference type="EMBL" id="AB012159">
    <property type="protein sequence ID" value="BAA32532.1"/>
    <property type="molecule type" value="Genomic_DNA"/>
</dbReference>
<dbReference type="EMBL" id="BC012697">
    <property type="protein sequence ID" value="AAH12697.1"/>
    <property type="molecule type" value="mRNA"/>
</dbReference>
<dbReference type="EMBL" id="BC012967">
    <property type="protein sequence ID" value="AAH12967.1"/>
    <property type="molecule type" value="mRNA"/>
</dbReference>
<dbReference type="CCDS" id="CCDS21498.1"/>
<dbReference type="RefSeq" id="NP_001404381.1">
    <property type="nucleotide sequence ID" value="NM_001417452.1"/>
</dbReference>
<dbReference type="RefSeq" id="NP_001404382.1">
    <property type="nucleotide sequence ID" value="NM_001417453.1"/>
</dbReference>
<dbReference type="RefSeq" id="NP_001404383.1">
    <property type="nucleotide sequence ID" value="NM_001417454.1"/>
</dbReference>
<dbReference type="RefSeq" id="NP_001404384.1">
    <property type="nucleotide sequence ID" value="NM_001417455.1"/>
</dbReference>
<dbReference type="RefSeq" id="NP_035801.3">
    <property type="nucleotide sequence ID" value="NM_011671.5"/>
</dbReference>
<dbReference type="RefSeq" id="XP_006507642.1">
    <property type="nucleotide sequence ID" value="XM_006507579.2"/>
</dbReference>
<dbReference type="PDB" id="2LCK">
    <property type="method" value="NMR"/>
    <property type="chains" value="A=14-309"/>
</dbReference>
<dbReference type="PDBsum" id="2LCK"/>
<dbReference type="BMRB" id="P70406"/>
<dbReference type="SMR" id="P70406"/>
<dbReference type="FunCoup" id="P70406">
    <property type="interactions" value="1048"/>
</dbReference>
<dbReference type="STRING" id="10090.ENSMUSP00000120967"/>
<dbReference type="PhosphoSitePlus" id="P70406"/>
<dbReference type="PaxDb" id="10090-ENSMUSP00000120967"/>
<dbReference type="ProteomicsDB" id="298427"/>
<dbReference type="Antibodypedia" id="31003">
    <property type="antibodies" value="404 antibodies from 39 providers"/>
</dbReference>
<dbReference type="DNASU" id="22228"/>
<dbReference type="Ensembl" id="ENSMUST00000126534.8">
    <property type="protein sequence ID" value="ENSMUSP00000120967.2"/>
    <property type="gene ID" value="ENSMUSG00000033685.14"/>
</dbReference>
<dbReference type="GeneID" id="22228"/>
<dbReference type="KEGG" id="mmu:22228"/>
<dbReference type="UCSC" id="uc009inb.3">
    <property type="organism name" value="mouse"/>
</dbReference>
<dbReference type="AGR" id="MGI:109354"/>
<dbReference type="CTD" id="7351"/>
<dbReference type="MGI" id="MGI:109354">
    <property type="gene designation" value="Ucp2"/>
</dbReference>
<dbReference type="VEuPathDB" id="HostDB:ENSMUSG00000033685"/>
<dbReference type="eggNOG" id="KOG0753">
    <property type="taxonomic scope" value="Eukaryota"/>
</dbReference>
<dbReference type="GeneTree" id="ENSGT00940000159524"/>
<dbReference type="HOGENOM" id="CLU_015166_14_2_1"/>
<dbReference type="InParanoid" id="P70406"/>
<dbReference type="OMA" id="HARRYCS"/>
<dbReference type="OrthoDB" id="448427at2759"/>
<dbReference type="PhylomeDB" id="P70406"/>
<dbReference type="TreeFam" id="TF323211"/>
<dbReference type="Reactome" id="R-MMU-167826">
    <property type="pathway name" value="The fatty acid cycling model"/>
</dbReference>
<dbReference type="BioGRID-ORCS" id="22228">
    <property type="hits" value="2 hits in 75 CRISPR screens"/>
</dbReference>
<dbReference type="ChiTaRS" id="Ucp2">
    <property type="organism name" value="mouse"/>
</dbReference>
<dbReference type="EvolutionaryTrace" id="P70406"/>
<dbReference type="PRO" id="PR:P70406"/>
<dbReference type="Proteomes" id="UP000000589">
    <property type="component" value="Chromosome 7"/>
</dbReference>
<dbReference type="RNAct" id="P70406">
    <property type="molecule type" value="protein"/>
</dbReference>
<dbReference type="Bgee" id="ENSMUSG00000033685">
    <property type="expression patterns" value="Expressed in blood and 244 other cell types or tissues"/>
</dbReference>
<dbReference type="ExpressionAtlas" id="P70406">
    <property type="expression patterns" value="baseline and differential"/>
</dbReference>
<dbReference type="GO" id="GO:0005743">
    <property type="term" value="C:mitochondrial inner membrane"/>
    <property type="evidence" value="ECO:0007669"/>
    <property type="project" value="UniProtKB-SubCell"/>
</dbReference>
<dbReference type="GO" id="GO:0031966">
    <property type="term" value="C:mitochondrial membrane"/>
    <property type="evidence" value="ECO:0000314"/>
    <property type="project" value="UniProtKB"/>
</dbReference>
<dbReference type="GO" id="GO:0005739">
    <property type="term" value="C:mitochondrion"/>
    <property type="evidence" value="ECO:0007005"/>
    <property type="project" value="MGI"/>
</dbReference>
<dbReference type="GO" id="GO:0015297">
    <property type="term" value="F:antiporter activity"/>
    <property type="evidence" value="ECO:0000250"/>
    <property type="project" value="UniProtKB"/>
</dbReference>
<dbReference type="GO" id="GO:0015108">
    <property type="term" value="F:chloride transmembrane transporter activity"/>
    <property type="evidence" value="ECO:0007669"/>
    <property type="project" value="Ensembl"/>
</dbReference>
<dbReference type="GO" id="GO:0019003">
    <property type="term" value="F:GDP binding"/>
    <property type="evidence" value="ECO:0000314"/>
    <property type="project" value="UniProtKB"/>
</dbReference>
<dbReference type="GO" id="GO:0015183">
    <property type="term" value="F:L-aspartate transmembrane transporter activity"/>
    <property type="evidence" value="ECO:0000250"/>
    <property type="project" value="UniProtKB"/>
</dbReference>
<dbReference type="GO" id="GO:0015140">
    <property type="term" value="F:malate transmembrane transporter activity"/>
    <property type="evidence" value="ECO:0000250"/>
    <property type="project" value="UniProtKB"/>
</dbReference>
<dbReference type="GO" id="GO:0015131">
    <property type="term" value="F:oxaloacetate transmembrane transporter activity"/>
    <property type="evidence" value="ECO:0000250"/>
    <property type="project" value="UniProtKB"/>
</dbReference>
<dbReference type="GO" id="GO:0140787">
    <property type="term" value="F:phosphate ion uniporter activity"/>
    <property type="evidence" value="ECO:0000250"/>
    <property type="project" value="UniProtKB"/>
</dbReference>
<dbReference type="GO" id="GO:0042803">
    <property type="term" value="F:protein homodimerization activity"/>
    <property type="evidence" value="ECO:0000250"/>
    <property type="project" value="UniProtKB"/>
</dbReference>
<dbReference type="GO" id="GO:0015078">
    <property type="term" value="F:proton transmembrane transporter activity"/>
    <property type="evidence" value="ECO:0000250"/>
    <property type="project" value="UniProtKB"/>
</dbReference>
<dbReference type="GO" id="GO:0008271">
    <property type="term" value="F:secondary active sulfate transmembrane transporter activity"/>
    <property type="evidence" value="ECO:0000250"/>
    <property type="project" value="UniProtKB"/>
</dbReference>
<dbReference type="GO" id="GO:0015740">
    <property type="term" value="P:C4-dicarboxylate transport"/>
    <property type="evidence" value="ECO:0000250"/>
    <property type="project" value="UniProtKB"/>
</dbReference>
<dbReference type="GO" id="GO:0034198">
    <property type="term" value="P:cellular response to amino acid starvation"/>
    <property type="evidence" value="ECO:0007669"/>
    <property type="project" value="Ensembl"/>
</dbReference>
<dbReference type="GO" id="GO:0071333">
    <property type="term" value="P:cellular response to glucose stimulus"/>
    <property type="evidence" value="ECO:0000315"/>
    <property type="project" value="UniProtKB"/>
</dbReference>
<dbReference type="GO" id="GO:0032869">
    <property type="term" value="P:cellular response to insulin stimulus"/>
    <property type="evidence" value="ECO:0007669"/>
    <property type="project" value="Ensembl"/>
</dbReference>
<dbReference type="GO" id="GO:0071284">
    <property type="term" value="P:cellular response to lead ion"/>
    <property type="evidence" value="ECO:0007669"/>
    <property type="project" value="Ensembl"/>
</dbReference>
<dbReference type="GO" id="GO:0006541">
    <property type="term" value="P:glutamine metabolic process"/>
    <property type="evidence" value="ECO:0000250"/>
    <property type="project" value="UniProtKB"/>
</dbReference>
<dbReference type="GO" id="GO:0006096">
    <property type="term" value="P:glycolytic process"/>
    <property type="evidence" value="ECO:0000250"/>
    <property type="project" value="UniProtKB"/>
</dbReference>
<dbReference type="GO" id="GO:0097421">
    <property type="term" value="P:liver regeneration"/>
    <property type="evidence" value="ECO:0007669"/>
    <property type="project" value="Ensembl"/>
</dbReference>
<dbReference type="GO" id="GO:0015909">
    <property type="term" value="P:long-chain fatty acid transport"/>
    <property type="evidence" value="ECO:0000314"/>
    <property type="project" value="UniProtKB"/>
</dbReference>
<dbReference type="GO" id="GO:0030225">
    <property type="term" value="P:macrophage differentiation"/>
    <property type="evidence" value="ECO:0000315"/>
    <property type="project" value="UniProtKB"/>
</dbReference>
<dbReference type="GO" id="GO:0000266">
    <property type="term" value="P:mitochondrial fission"/>
    <property type="evidence" value="ECO:0000315"/>
    <property type="project" value="UniProtKB"/>
</dbReference>
<dbReference type="GO" id="GO:1990542">
    <property type="term" value="P:mitochondrial transmembrane transport"/>
    <property type="evidence" value="ECO:0000250"/>
    <property type="project" value="UniProtKB"/>
</dbReference>
<dbReference type="GO" id="GO:0110099">
    <property type="term" value="P:negative regulation of calcium import into the mitochondrion"/>
    <property type="evidence" value="ECO:0007669"/>
    <property type="project" value="Ensembl"/>
</dbReference>
<dbReference type="GO" id="GO:0061179">
    <property type="term" value="P:negative regulation of insulin secretion involved in cellular response to glucose stimulus"/>
    <property type="evidence" value="ECO:0007669"/>
    <property type="project" value="Ensembl"/>
</dbReference>
<dbReference type="GO" id="GO:0043524">
    <property type="term" value="P:negative regulation of neuron apoptotic process"/>
    <property type="evidence" value="ECO:0000315"/>
    <property type="project" value="MGI"/>
</dbReference>
<dbReference type="GO" id="GO:0120162">
    <property type="term" value="P:positive regulation of cold-induced thermogenesis"/>
    <property type="evidence" value="ECO:0000315"/>
    <property type="project" value="YuBioLab"/>
</dbReference>
<dbReference type="GO" id="GO:0072593">
    <property type="term" value="P:reactive oxygen species metabolic process"/>
    <property type="evidence" value="ECO:0000315"/>
    <property type="project" value="UniProtKB"/>
</dbReference>
<dbReference type="GO" id="GO:0051881">
    <property type="term" value="P:regulation of mitochondrial membrane potential"/>
    <property type="evidence" value="ECO:0000315"/>
    <property type="project" value="ParkinsonsUK-UCL"/>
</dbReference>
<dbReference type="GO" id="GO:0071548">
    <property type="term" value="P:response to dexamethasone"/>
    <property type="evidence" value="ECO:0007669"/>
    <property type="project" value="Ensembl"/>
</dbReference>
<dbReference type="GO" id="GO:0070542">
    <property type="term" value="P:response to fatty acid"/>
    <property type="evidence" value="ECO:0007669"/>
    <property type="project" value="Ensembl"/>
</dbReference>
<dbReference type="GO" id="GO:0001666">
    <property type="term" value="P:response to hypoxia"/>
    <property type="evidence" value="ECO:0007669"/>
    <property type="project" value="Ensembl"/>
</dbReference>
<dbReference type="GO" id="GO:0000303">
    <property type="term" value="P:response to superoxide"/>
    <property type="evidence" value="ECO:0007669"/>
    <property type="project" value="Ensembl"/>
</dbReference>
<dbReference type="FunFam" id="1.50.40.10:FF:000008">
    <property type="entry name" value="Mitochondrial uncoupling protein 2"/>
    <property type="match status" value="1"/>
</dbReference>
<dbReference type="Gene3D" id="1.50.40.10">
    <property type="entry name" value="Mitochondrial carrier domain"/>
    <property type="match status" value="1"/>
</dbReference>
<dbReference type="InterPro" id="IPR002067">
    <property type="entry name" value="Mit_carrier"/>
</dbReference>
<dbReference type="InterPro" id="IPR050391">
    <property type="entry name" value="Mito_Metabolite_Transporter"/>
</dbReference>
<dbReference type="InterPro" id="IPR018108">
    <property type="entry name" value="Mitochondrial_sb/sol_carrier"/>
</dbReference>
<dbReference type="InterPro" id="IPR023395">
    <property type="entry name" value="Mt_carrier_dom_sf"/>
</dbReference>
<dbReference type="PANTHER" id="PTHR45618">
    <property type="entry name" value="MITOCHONDRIAL DICARBOXYLATE CARRIER-RELATED"/>
    <property type="match status" value="1"/>
</dbReference>
<dbReference type="Pfam" id="PF00153">
    <property type="entry name" value="Mito_carr"/>
    <property type="match status" value="3"/>
</dbReference>
<dbReference type="PRINTS" id="PR00784">
    <property type="entry name" value="MTUNCOUPLING"/>
</dbReference>
<dbReference type="SUPFAM" id="SSF103506">
    <property type="entry name" value="Mitochondrial carrier"/>
    <property type="match status" value="1"/>
</dbReference>
<dbReference type="PROSITE" id="PS50920">
    <property type="entry name" value="SOLCAR"/>
    <property type="match status" value="3"/>
</dbReference>